<feature type="chain" id="PRO_0000204024" description="Ice nucleation protein">
    <location>
        <begin position="1"/>
        <end position="1200"/>
    </location>
</feature>
<feature type="region of interest" description="Octapeptide periodicity">
    <location>
        <begin position="176"/>
        <end position="1151"/>
    </location>
</feature>
<name>ICEN_PSESY</name>
<gene>
    <name type="primary">inaZ</name>
</gene>
<protein>
    <recommendedName>
        <fullName>Ice nucleation protein</fullName>
    </recommendedName>
</protein>
<comment type="function">
    <text>Ice nucleation proteins enable bacteria to nucleate crystallization in supercooled water.</text>
</comment>
<comment type="subcellular location">
    <subcellularLocation>
        <location evidence="2">Cell outer membrane</location>
    </subcellularLocation>
</comment>
<comment type="domain">
    <text>Contains 122 imperfect repeats of a consensus octapeptide A-G-Y-G-S-T-L-T; further on a 16-residue and a regional 48-residue periodicity is superimposed.</text>
</comment>
<comment type="biotechnology">
    <text evidence="1">Used by snowmaking industry to promote ice nucleation for artificial snow and economize water. Sold under the name Snomax by York.</text>
</comment>
<comment type="miscellaneous">
    <text>A structural model is suggested in which the ice nucleation protein displays a symmetry related to that of ice.</text>
</comment>
<comment type="similarity">
    <text evidence="3">Belongs to the bacterial ice nucleation protein family.</text>
</comment>
<proteinExistence type="evidence at protein level"/>
<keyword id="KW-0002">3D-structure</keyword>
<keyword id="KW-0998">Cell outer membrane</keyword>
<keyword id="KW-0387">Ice nucleation</keyword>
<keyword id="KW-0472">Membrane</keyword>
<keyword id="KW-0677">Repeat</keyword>
<sequence>MNLDKALVLRTCANNMADHCGLIWPASGTVESRYWQSTRRHENGLVGLLWGAGTSAFLSVHADARWIVCEVAVADIISLEEPGMVKFPRAEVVHVGDRISASHFISARQADPASTSTSTLTPMPTAIPTPMPAVASVTLPVAEQARHEVFDVASVSAAAAPVNTLPVTTPQNVQTATYGSTLSGDNHSRLIAGYGSNETAGNHSDLIAGYGSTGTAGSDSWLVAGYGSTQTAGGDSALTAGYGSTQTAREGSNLTAGYGSTGTAGSDSSLIAGYGSTQTSGGDSSLTAGYGSTQTAQEGSNLTAGYGSTGTAGSDSSLIAGYGSTQTSGGDSSLTAGYGSTQTAQEGSNLTAGYGSTGTAGVDSSLIAGYGSTQTSGSDSALTAGYGSTQTAQEGSNLTAGYGSTGTAGSDSSLIAGYGSTQTSGSDSSLTAGYGSTQTAQEGSILTAGYGSTGTAGVDSSLIAGYGSTQTSGSDSALTAGYGSTQTAQEGSNLTAGYGSTGTAGADSSLIAGYGSTQTSGSESSLTAGYGSTQTAREGSTLTAGYGSTGTAGADSSLIAGYGSTQTSGSESSLTAGYGSTQTAQQGSVLTSGYGSTQTAGAASNLTTGYGSTGTAGHESFIIAGYGSTQTAGHKSILTAGYGSTQTARDGSDLIAGYGSTGTAGSGSSLIAGYGSTQTASYRSMLTAGYGSTQTAREHSDLVTGYGSTSTAGSNSSLIAGYGSTQTAGFKSILTAGYGSTQTAQERTSLVAGYGSTSTAGYSSSLIAGYGSTQTAGYESTLTAGYGSTQTAQENSSLTTGYGSTSTAGYSSSLIAGYGSTQTAGYESTLTAGYGSTQTAQERSDLVTGYGSTSTAGYASSLIAGYGSTQTAGYESTLTAGYGSTQTAQENSSLTTGYGSTSTAGFASSLISGYGSTQTAGYKSTLTAGYGSTQTAEYGSSLTAGYGSTATAGQDSSLIAGYGSSLTSGIRSFLTAGYGSTLIAGLRSVLIAGYGSSLTSGVRSTLTAGYGSNQIASYGSSLIAGHESIQVAGNKSMLIAGKGSSQTAGFRSTLIAGAGSVQLAGDRSRLIAGADSNQTAGDRSKLLAGNNSYLTAGDRSKLTGGHDCTLMAGDQSRLTAGKNSVLTAGARSKLIGSEGSTLSAGEDSILIFRLWDGKRYRQLVARTGENGVEADIPYYVNEDDDIVDKPDEDDDWIEVK</sequence>
<dbReference type="EMBL" id="X03035">
    <property type="protein sequence ID" value="CAA26837.1"/>
    <property type="molecule type" value="Genomic_DNA"/>
</dbReference>
<dbReference type="PIR" id="A24405">
    <property type="entry name" value="SNPSO"/>
</dbReference>
<dbReference type="PDB" id="6M9I">
    <property type="method" value="EM"/>
    <property type="resolution" value="0.90 A"/>
    <property type="chains" value="A=899-904"/>
</dbReference>
<dbReference type="PDB" id="6M9J">
    <property type="method" value="EM"/>
    <property type="resolution" value="0.90 A"/>
    <property type="chains" value="A=899-904"/>
</dbReference>
<dbReference type="PDBsum" id="6M9I"/>
<dbReference type="PDBsum" id="6M9J"/>
<dbReference type="SMR" id="P06620"/>
<dbReference type="TCDB" id="9.B.133.1.1">
    <property type="family name" value="the ice nucleation protein secretion system (inp-ss) family"/>
</dbReference>
<dbReference type="GO" id="GO:0009279">
    <property type="term" value="C:cell outer membrane"/>
    <property type="evidence" value="ECO:0007669"/>
    <property type="project" value="UniProtKB-SubCell"/>
</dbReference>
<dbReference type="GO" id="GO:0050825">
    <property type="term" value="F:ice binding"/>
    <property type="evidence" value="ECO:0007669"/>
    <property type="project" value="UniProtKB-KW"/>
</dbReference>
<dbReference type="InterPro" id="IPR000258">
    <property type="entry name" value="Ice_nucleatn"/>
</dbReference>
<dbReference type="PANTHER" id="PTHR31294">
    <property type="match status" value="1"/>
</dbReference>
<dbReference type="PANTHER" id="PTHR31294:SF8">
    <property type="entry name" value="KERATIN-ASSOCIATED PROTEIN 21-1-RELATED"/>
    <property type="match status" value="1"/>
</dbReference>
<dbReference type="Pfam" id="PF00818">
    <property type="entry name" value="Ice_nucleation"/>
    <property type="match status" value="40"/>
</dbReference>
<dbReference type="PRINTS" id="PR00327">
    <property type="entry name" value="ICENUCLEATN"/>
</dbReference>
<dbReference type="SUPFAM" id="SSF69349">
    <property type="entry name" value="Phage fibre proteins"/>
    <property type="match status" value="8"/>
</dbReference>
<dbReference type="PROSITE" id="PS00314">
    <property type="entry name" value="ICE_NUCLEATION"/>
    <property type="match status" value="40"/>
</dbReference>
<reference key="1">
    <citation type="journal article" date="1985" name="Nature">
        <title>Physical and functional repetition in a bacterial ice nucleation gene.</title>
        <authorList>
            <person name="Green R.L."/>
            <person name="Warren G.J."/>
        </authorList>
    </citation>
    <scope>NUCLEOTIDE SEQUENCE [GENOMIC DNA]</scope>
    <source>
        <strain>S203</strain>
    </source>
</reference>
<reference key="2">
    <citation type="journal article" date="1989" name="Mol. Plant Microbe Interact.">
        <title>Localization of ice nucleation activity and the iceC gene product in Pseudomonas syringae and Escherichia coli.</title>
        <authorList>
            <person name="Lindow S.E."/>
            <person name="Lahue E."/>
            <person name="Govindarajan A.G."/>
            <person name="Panopoulos N.J."/>
            <person name="Gies D."/>
        </authorList>
    </citation>
    <scope>SUBCELLULAR LOCATION</scope>
</reference>
<reference key="3">
    <citation type="journal article" date="1993" name="J. Mol. Biol.">
        <title>A model of the three-dimensional structure of ice nucleation proteins.</title>
        <authorList>
            <person name="Kajava A.V."/>
            <person name="Lindow S.E."/>
        </authorList>
    </citation>
    <scope>3D-STRUCTURE MODELING OF 490-535</scope>
</reference>
<reference key="4">
    <citation type="journal article" date="1991" name="Crit. Rev. Biotechnol.">
        <title>Principles and biotechnological applications of bacterial ice nucleation.</title>
        <authorList>
            <person name="Margaritis A."/>
            <person name="Bassi A.S."/>
        </authorList>
    </citation>
    <scope>BIOTECHNOLOGICAL RELEVANCE</scope>
</reference>
<accession>P06620</accession>
<organism>
    <name type="scientific">Pseudomonas syringae pv. syringae</name>
    <dbReference type="NCBI Taxonomy" id="321"/>
    <lineage>
        <taxon>Bacteria</taxon>
        <taxon>Pseudomonadati</taxon>
        <taxon>Pseudomonadota</taxon>
        <taxon>Gammaproteobacteria</taxon>
        <taxon>Pseudomonadales</taxon>
        <taxon>Pseudomonadaceae</taxon>
        <taxon>Pseudomonas</taxon>
        <taxon>Pseudomonas syringae</taxon>
    </lineage>
</organism>
<evidence type="ECO:0000269" key="1">
    <source>
    </source>
</evidence>
<evidence type="ECO:0000269" key="2">
    <source>
    </source>
</evidence>
<evidence type="ECO:0000305" key="3"/>